<organism>
    <name type="scientific">Saccharomyces cerevisiae (strain RM11-1a)</name>
    <name type="common">Baker's yeast</name>
    <dbReference type="NCBI Taxonomy" id="285006"/>
    <lineage>
        <taxon>Eukaryota</taxon>
        <taxon>Fungi</taxon>
        <taxon>Dikarya</taxon>
        <taxon>Ascomycota</taxon>
        <taxon>Saccharomycotina</taxon>
        <taxon>Saccharomycetes</taxon>
        <taxon>Saccharomycetales</taxon>
        <taxon>Saccharomycetaceae</taxon>
        <taxon>Saccharomyces</taxon>
    </lineage>
</organism>
<protein>
    <recommendedName>
        <fullName>GTP-binding protein YPT11</fullName>
    </recommendedName>
    <alternativeName>
        <fullName>Rab GTPase YPT11</fullName>
    </alternativeName>
</protein>
<evidence type="ECO:0000250" key="1"/>
<evidence type="ECO:0000255" key="2"/>
<evidence type="ECO:0000256" key="3">
    <source>
        <dbReference type="SAM" id="MobiDB-lite"/>
    </source>
</evidence>
<evidence type="ECO:0000305" key="4"/>
<comment type="function">
    <text evidence="1">Involved in the positive control of both endoplasmic reticulum (ER) and mitochondrion inheritance during cell divison. Required for the MYO2-dependent retention of newly inherited mitochondria at the bud tip in developing daughter cells (By similarity).</text>
</comment>
<comment type="subunit">
    <text evidence="1">Interacts with MYO2 (via C-terminal tail domain). Interacts with YIF1, YIP3, YIP4 and YIP5 (By similarity).</text>
</comment>
<comment type="subcellular location">
    <subcellularLocation>
        <location evidence="1">Endoplasmic reticulum membrane</location>
        <topology evidence="1">Lipid-anchor</topology>
        <orientation evidence="1">Cytoplasmic side</orientation>
    </subcellularLocation>
    <subcellularLocation>
        <location evidence="1">Bud tip</location>
    </subcellularLocation>
    <subcellularLocation>
        <location evidence="1">Bud neck</location>
    </subcellularLocation>
    <text evidence="1">Enriched in the peripheral ER of small buds and daughter cells. Concentrates at the site of bud emergence, at the bud tip of the growing bud, and at the bud neck during the M phase. Interaction with MYO2 is required for proper localization to the bud (By similarity).</text>
</comment>
<comment type="similarity">
    <text evidence="4">Belongs to the small GTPase superfamily. Rab family.</text>
</comment>
<feature type="chain" id="PRO_0000377659" description="GTP-binding protein YPT11">
    <location>
        <begin position="1"/>
        <end position="417"/>
    </location>
</feature>
<feature type="region of interest" description="Disordered" evidence="3">
    <location>
        <begin position="1"/>
        <end position="34"/>
    </location>
</feature>
<feature type="binding site" evidence="2">
    <location>
        <begin position="97"/>
        <end position="104"/>
    </location>
    <ligand>
        <name>GTP</name>
        <dbReference type="ChEBI" id="CHEBI:37565"/>
    </ligand>
</feature>
<feature type="binding site" evidence="2">
    <location>
        <begin position="228"/>
        <end position="232"/>
    </location>
    <ligand>
        <name>GTP</name>
        <dbReference type="ChEBI" id="CHEBI:37565"/>
    </ligand>
</feature>
<feature type="binding site" evidence="2">
    <location>
        <begin position="292"/>
        <end position="295"/>
    </location>
    <ligand>
        <name>GTP</name>
        <dbReference type="ChEBI" id="CHEBI:37565"/>
    </ligand>
</feature>
<feature type="lipid moiety-binding region" description="S-geranylgeranyl cysteine" evidence="1">
    <location>
        <position position="415"/>
    </location>
</feature>
<feature type="lipid moiety-binding region" description="S-geranylgeranyl cysteine" evidence="1">
    <location>
        <position position="416"/>
    </location>
</feature>
<accession>B3LPD8</accession>
<reference key="1">
    <citation type="submission" date="2005-03" db="EMBL/GenBank/DDBJ databases">
        <title>Annotation of the Saccharomyces cerevisiae RM11-1a genome.</title>
        <authorList>
            <consortium name="The Broad Institute Genome Sequencing Platform"/>
            <person name="Birren B.W."/>
            <person name="Lander E.S."/>
            <person name="Galagan J.E."/>
            <person name="Nusbaum C."/>
            <person name="Devon K."/>
            <person name="Cuomo C."/>
            <person name="Jaffe D.B."/>
            <person name="Butler J."/>
            <person name="Alvarez P."/>
            <person name="Gnerre S."/>
            <person name="Grabherr M."/>
            <person name="Kleber M."/>
            <person name="Mauceli E.W."/>
            <person name="Brockman W."/>
            <person name="MacCallum I.A."/>
            <person name="Rounsley S."/>
            <person name="Young S.K."/>
            <person name="LaButti K."/>
            <person name="Pushparaj V."/>
            <person name="DeCaprio D."/>
            <person name="Crawford M."/>
            <person name="Koehrsen M."/>
            <person name="Engels R."/>
            <person name="Montgomery P."/>
            <person name="Pearson M."/>
            <person name="Howarth C."/>
            <person name="Larson L."/>
            <person name="Luoma S."/>
            <person name="White J."/>
            <person name="O'Leary S."/>
            <person name="Kodira C.D."/>
            <person name="Zeng Q."/>
            <person name="Yandava C."/>
            <person name="Alvarado L."/>
            <person name="Pratt S."/>
            <person name="Kruglyak L."/>
        </authorList>
    </citation>
    <scope>NUCLEOTIDE SEQUENCE [LARGE SCALE GENOMIC DNA]</scope>
    <source>
        <strain>RM11-1a</strain>
    </source>
</reference>
<dbReference type="EMBL" id="CH408049">
    <property type="protein sequence ID" value="EDV12533.1"/>
    <property type="molecule type" value="Genomic_DNA"/>
</dbReference>
<dbReference type="SMR" id="B3LPD8"/>
<dbReference type="HOGENOM" id="CLU_030444_0_0_1"/>
<dbReference type="OrthoDB" id="7141at4893"/>
<dbReference type="Proteomes" id="UP000008335">
    <property type="component" value="Unassembled WGS sequence"/>
</dbReference>
<dbReference type="GO" id="GO:0005935">
    <property type="term" value="C:cellular bud neck"/>
    <property type="evidence" value="ECO:0007669"/>
    <property type="project" value="UniProtKB-SubCell"/>
</dbReference>
<dbReference type="GO" id="GO:0005934">
    <property type="term" value="C:cellular bud tip"/>
    <property type="evidence" value="ECO:0007669"/>
    <property type="project" value="UniProtKB-SubCell"/>
</dbReference>
<dbReference type="GO" id="GO:0005789">
    <property type="term" value="C:endoplasmic reticulum membrane"/>
    <property type="evidence" value="ECO:0007669"/>
    <property type="project" value="UniProtKB-SubCell"/>
</dbReference>
<dbReference type="GO" id="GO:0005525">
    <property type="term" value="F:GTP binding"/>
    <property type="evidence" value="ECO:0007669"/>
    <property type="project" value="UniProtKB-KW"/>
</dbReference>
<dbReference type="GO" id="GO:0003924">
    <property type="term" value="F:GTPase activity"/>
    <property type="evidence" value="ECO:0007669"/>
    <property type="project" value="InterPro"/>
</dbReference>
<dbReference type="CDD" id="cd00154">
    <property type="entry name" value="Rab"/>
    <property type="match status" value="1"/>
</dbReference>
<dbReference type="FunFam" id="3.40.50.300:FF:002492">
    <property type="entry name" value="GTP-binding protein YPT11"/>
    <property type="match status" value="1"/>
</dbReference>
<dbReference type="Gene3D" id="3.40.50.300">
    <property type="entry name" value="P-loop containing nucleotide triphosphate hydrolases"/>
    <property type="match status" value="1"/>
</dbReference>
<dbReference type="InterPro" id="IPR027417">
    <property type="entry name" value="P-loop_NTPase"/>
</dbReference>
<dbReference type="InterPro" id="IPR050227">
    <property type="entry name" value="Rab"/>
</dbReference>
<dbReference type="InterPro" id="IPR005225">
    <property type="entry name" value="Small_GTP-bd"/>
</dbReference>
<dbReference type="InterPro" id="IPR001806">
    <property type="entry name" value="Small_GTPase"/>
</dbReference>
<dbReference type="NCBIfam" id="TIGR00231">
    <property type="entry name" value="small_GTP"/>
    <property type="match status" value="1"/>
</dbReference>
<dbReference type="PANTHER" id="PTHR47977">
    <property type="entry name" value="RAS-RELATED PROTEIN RAB"/>
    <property type="match status" value="1"/>
</dbReference>
<dbReference type="Pfam" id="PF00071">
    <property type="entry name" value="Ras"/>
    <property type="match status" value="1"/>
</dbReference>
<dbReference type="SMART" id="SM00175">
    <property type="entry name" value="RAB"/>
    <property type="match status" value="1"/>
</dbReference>
<dbReference type="SMART" id="SM00173">
    <property type="entry name" value="RAS"/>
    <property type="match status" value="1"/>
</dbReference>
<dbReference type="SMART" id="SM00174">
    <property type="entry name" value="RHO"/>
    <property type="match status" value="1"/>
</dbReference>
<dbReference type="SUPFAM" id="SSF52540">
    <property type="entry name" value="P-loop containing nucleoside triphosphate hydrolases"/>
    <property type="match status" value="1"/>
</dbReference>
<dbReference type="PROSITE" id="PS51419">
    <property type="entry name" value="RAB"/>
    <property type="match status" value="1"/>
</dbReference>
<keyword id="KW-0256">Endoplasmic reticulum</keyword>
<keyword id="KW-0342">GTP-binding</keyword>
<keyword id="KW-0449">Lipoprotein</keyword>
<keyword id="KW-0472">Membrane</keyword>
<keyword id="KW-0547">Nucleotide-binding</keyword>
<keyword id="KW-0636">Prenylation</keyword>
<name>YPT11_YEAS1</name>
<gene>
    <name type="primary">YPT11</name>
    <name type="ORF">SCRG_03428</name>
</gene>
<sequence>MSQRKRYSLNVVTSPSIPSPTPSAPIRTNESNWEAASPASAASSFLPNVHHGGTVLNPGLGIMRSPSLNKSGAFGRSGSSGSSTVIEPSNIKLLLIGDANVGKTAMILSYCRELLTRAEMSRSVRLRHQQQQQHKDLGLKKTVVNHRLSMKEKRKRYSSNDFEKEFKDINHFADETSDFGNPNIGDDNNHEMADPNEIVIETRSTIGIDIKTNLVNIDNRFFNVILWDTAGQERYQNAIIPSLYKKTNAVILTYDITNAKSFQSCMERWIVQALENFSSQDLLKARFFLVGNKIDLYKERQVTHYDVVQMVQEMQLKHGIKISGNFEVSCKWVNVVERTMNMIILDLVENGCFENNDPCVSITISDDVQGHEQEFHDTVEEPFNFTRQRQHQLEKNNTVDITKPNDDIANNQSICCV</sequence>
<proteinExistence type="inferred from homology"/>